<dbReference type="EMBL" id="AJ271079">
    <property type="protein sequence ID" value="CAB67189.2"/>
    <property type="molecule type" value="Genomic_DNA"/>
</dbReference>
<dbReference type="RefSeq" id="NP_084723.2">
    <property type="nucleotide sequence ID" value="NC_002693.2"/>
</dbReference>
<dbReference type="SMR" id="Q9MTJ5"/>
<dbReference type="GeneID" id="802736"/>
<dbReference type="GO" id="GO:0009535">
    <property type="term" value="C:chloroplast thylakoid membrane"/>
    <property type="evidence" value="ECO:0007669"/>
    <property type="project" value="UniProtKB-SubCell"/>
</dbReference>
<dbReference type="GO" id="GO:0045158">
    <property type="term" value="F:electron transporter, transferring electrons within cytochrome b6/f complex of photosystem II activity"/>
    <property type="evidence" value="ECO:0007669"/>
    <property type="project" value="UniProtKB-UniRule"/>
</dbReference>
<dbReference type="GO" id="GO:0046872">
    <property type="term" value="F:metal ion binding"/>
    <property type="evidence" value="ECO:0007669"/>
    <property type="project" value="UniProtKB-KW"/>
</dbReference>
<dbReference type="GO" id="GO:0016491">
    <property type="term" value="F:oxidoreductase activity"/>
    <property type="evidence" value="ECO:0007669"/>
    <property type="project" value="InterPro"/>
</dbReference>
<dbReference type="GO" id="GO:0015979">
    <property type="term" value="P:photosynthesis"/>
    <property type="evidence" value="ECO:0007669"/>
    <property type="project" value="UniProtKB-UniRule"/>
</dbReference>
<dbReference type="GO" id="GO:0022904">
    <property type="term" value="P:respiratory electron transport chain"/>
    <property type="evidence" value="ECO:0007669"/>
    <property type="project" value="InterPro"/>
</dbReference>
<dbReference type="CDD" id="cd00284">
    <property type="entry name" value="Cytochrome_b_N"/>
    <property type="match status" value="1"/>
</dbReference>
<dbReference type="FunFam" id="1.20.810.10:FF:000001">
    <property type="entry name" value="Cytochrome b6"/>
    <property type="match status" value="1"/>
</dbReference>
<dbReference type="Gene3D" id="1.20.810.10">
    <property type="entry name" value="Cytochrome Bc1 Complex, Chain C"/>
    <property type="match status" value="1"/>
</dbReference>
<dbReference type="HAMAP" id="MF_00633">
    <property type="entry name" value="Cytb6_f_cytb6"/>
    <property type="match status" value="1"/>
</dbReference>
<dbReference type="InterPro" id="IPR005797">
    <property type="entry name" value="Cyt_b/b6_N"/>
</dbReference>
<dbReference type="InterPro" id="IPR023530">
    <property type="entry name" value="Cyt_B6_PetB"/>
</dbReference>
<dbReference type="InterPro" id="IPR027387">
    <property type="entry name" value="Cytb/b6-like_sf"/>
</dbReference>
<dbReference type="InterPro" id="IPR048259">
    <property type="entry name" value="Cytochrome_b_N_euk/bac"/>
</dbReference>
<dbReference type="InterPro" id="IPR016174">
    <property type="entry name" value="Di-haem_cyt_TM"/>
</dbReference>
<dbReference type="NCBIfam" id="NF002990">
    <property type="entry name" value="PRK03735.1"/>
    <property type="match status" value="1"/>
</dbReference>
<dbReference type="PANTHER" id="PTHR19271">
    <property type="entry name" value="CYTOCHROME B"/>
    <property type="match status" value="1"/>
</dbReference>
<dbReference type="PANTHER" id="PTHR19271:SF16">
    <property type="entry name" value="CYTOCHROME B"/>
    <property type="match status" value="1"/>
</dbReference>
<dbReference type="Pfam" id="PF00033">
    <property type="entry name" value="Cytochrome_B"/>
    <property type="match status" value="1"/>
</dbReference>
<dbReference type="PIRSF" id="PIRSF000032">
    <property type="entry name" value="Cytochrome_b6"/>
    <property type="match status" value="1"/>
</dbReference>
<dbReference type="SUPFAM" id="SSF81342">
    <property type="entry name" value="Transmembrane di-heme cytochromes"/>
    <property type="match status" value="1"/>
</dbReference>
<dbReference type="PROSITE" id="PS51002">
    <property type="entry name" value="CYTB_NTER"/>
    <property type="match status" value="1"/>
</dbReference>
<name>CYB6_OENEH</name>
<evidence type="ECO:0000255" key="1">
    <source>
        <dbReference type="HAMAP-Rule" id="MF_00633"/>
    </source>
</evidence>
<reference key="1">
    <citation type="journal article" date="2000" name="Mol. Gen. Genet.">
        <title>Complete nucleotide sequence of the Oenothera elata plastid chromosome, representing plastome I of the five distinguishable Euoenothera plastomes.</title>
        <authorList>
            <person name="Hupfer H."/>
            <person name="Swiatek M."/>
            <person name="Hornung S."/>
            <person name="Herrmann R.G."/>
            <person name="Maier R.M."/>
            <person name="Chiu W.-L."/>
            <person name="Sears B."/>
        </authorList>
    </citation>
    <scope>NUCLEOTIDE SEQUENCE [LARGE SCALE GENOMIC DNA]</scope>
    <source>
        <strain>cv. Johansen</strain>
    </source>
</reference>
<reference key="2">
    <citation type="journal article" date="2008" name="Nucleic Acids Res.">
        <title>The complete nucleotide sequences of the five genetically distinct plastid genomes of Oenothera, subsection Oenothera: I. Sequence evaluation and plastome evolution.</title>
        <authorList>
            <person name="Greiner S."/>
            <person name="Wang X."/>
            <person name="Rauwolf U."/>
            <person name="Silber M.V."/>
            <person name="Mayer K."/>
            <person name="Meurer J."/>
            <person name="Haberer G."/>
            <person name="Herrmann R.G."/>
        </authorList>
    </citation>
    <scope>SEQUENCE REVISION TO 70; 73 AND 106</scope>
</reference>
<proteinExistence type="inferred from homology"/>
<feature type="chain" id="PRO_0000061807" description="Cytochrome b6">
    <location>
        <begin position="1"/>
        <end position="215"/>
    </location>
</feature>
<feature type="transmembrane region" description="Helical" evidence="1">
    <location>
        <begin position="32"/>
        <end position="52"/>
    </location>
</feature>
<feature type="transmembrane region" description="Helical" evidence="1">
    <location>
        <begin position="90"/>
        <end position="110"/>
    </location>
</feature>
<feature type="transmembrane region" description="Helical" evidence="1">
    <location>
        <begin position="116"/>
        <end position="136"/>
    </location>
</feature>
<feature type="transmembrane region" description="Helical" evidence="1">
    <location>
        <begin position="186"/>
        <end position="206"/>
    </location>
</feature>
<feature type="binding site" description="covalent" evidence="1">
    <location>
        <position position="35"/>
    </location>
    <ligand>
        <name>heme c</name>
        <dbReference type="ChEBI" id="CHEBI:61717"/>
    </ligand>
</feature>
<feature type="binding site" description="axial binding residue" evidence="1">
    <location>
        <position position="86"/>
    </location>
    <ligand>
        <name>heme b</name>
        <dbReference type="ChEBI" id="CHEBI:60344"/>
        <label>2</label>
    </ligand>
    <ligandPart>
        <name>Fe</name>
        <dbReference type="ChEBI" id="CHEBI:18248"/>
    </ligandPart>
</feature>
<feature type="binding site" description="axial binding residue" evidence="1">
    <location>
        <position position="100"/>
    </location>
    <ligand>
        <name>heme b</name>
        <dbReference type="ChEBI" id="CHEBI:60344"/>
        <label>1</label>
    </ligand>
    <ligandPart>
        <name>Fe</name>
        <dbReference type="ChEBI" id="CHEBI:18248"/>
    </ligandPart>
</feature>
<feature type="binding site" description="axial binding residue" evidence="1">
    <location>
        <position position="187"/>
    </location>
    <ligand>
        <name>heme b</name>
        <dbReference type="ChEBI" id="CHEBI:60344"/>
        <label>2</label>
    </ligand>
    <ligandPart>
        <name>Fe</name>
        <dbReference type="ChEBI" id="CHEBI:18248"/>
    </ligandPart>
</feature>
<feature type="binding site" description="axial binding residue" evidence="1">
    <location>
        <position position="202"/>
    </location>
    <ligand>
        <name>heme b</name>
        <dbReference type="ChEBI" id="CHEBI:60344"/>
        <label>1</label>
    </ligand>
    <ligandPart>
        <name>Fe</name>
        <dbReference type="ChEBI" id="CHEBI:18248"/>
    </ligandPart>
</feature>
<accession>Q9MTJ5</accession>
<protein>
    <recommendedName>
        <fullName evidence="1">Cytochrome b6</fullName>
    </recommendedName>
</protein>
<gene>
    <name evidence="1" type="primary">petB</name>
</gene>
<sequence length="215" mass="24167">MSKVYDWFEERLEIQAIADDITSKYVPPHVNIFYCLGGITLTCFLVQVATGFAMTFYYRPTVTEAFASVQYIMTEANFGWLIRSVHRWSASMMVLMMILHVFRVYLTGGFKKPRELTWVTGVVLAVLTASFGVTGYSLPWDQIGYWAVKIVTGVPDAIPVIGSPLVELLRGSASVGQSTLTRFYSLHTFVLPLLTAVFMLMHFLMIRKQGISGPL</sequence>
<keyword id="KW-0150">Chloroplast</keyword>
<keyword id="KW-0249">Electron transport</keyword>
<keyword id="KW-0349">Heme</keyword>
<keyword id="KW-0408">Iron</keyword>
<keyword id="KW-0472">Membrane</keyword>
<keyword id="KW-0479">Metal-binding</keyword>
<keyword id="KW-0602">Photosynthesis</keyword>
<keyword id="KW-0934">Plastid</keyword>
<keyword id="KW-0793">Thylakoid</keyword>
<keyword id="KW-0812">Transmembrane</keyword>
<keyword id="KW-1133">Transmembrane helix</keyword>
<keyword id="KW-0813">Transport</keyword>
<geneLocation type="chloroplast"/>
<comment type="function">
    <text evidence="1">Component of the cytochrome b6-f complex, which mediates electron transfer between photosystem II (PSII) and photosystem I (PSI), cyclic electron flow around PSI, and state transitions.</text>
</comment>
<comment type="cofactor">
    <cofactor evidence="1">
        <name>heme b</name>
        <dbReference type="ChEBI" id="CHEBI:60344"/>
    </cofactor>
    <text evidence="1">Binds 2 heme b groups non-covalently with two histidine residues as axial ligands.</text>
</comment>
<comment type="cofactor">
    <cofactor evidence="1">
        <name>heme c</name>
        <dbReference type="ChEBI" id="CHEBI:61717"/>
    </cofactor>
    <text evidence="1">Binds one heme group covalently by a single cysteine link with no axial amino acid ligand. This heme was named heme ci.</text>
</comment>
<comment type="subunit">
    <text evidence="1">The 4 large subunits of the cytochrome b6-f complex are cytochrome b6, subunit IV (17 kDa polypeptide, PetD), cytochrome f and the Rieske protein, while the 4 small subunits are PetG, PetL, PetM and PetN. The complex functions as a dimer.</text>
</comment>
<comment type="subcellular location">
    <subcellularLocation>
        <location evidence="1">Plastid</location>
        <location evidence="1">Chloroplast thylakoid membrane</location>
        <topology evidence="1">Multi-pass membrane protein</topology>
    </subcellularLocation>
</comment>
<comment type="miscellaneous">
    <text evidence="1">Heme 1 (or BH or b566) is high-potential and absorbs at about 566 nm, and heme 2 (or BL or b562) is low-potential and absorbs at about 562 nm.</text>
</comment>
<comment type="similarity">
    <text evidence="1">Belongs to the cytochrome b family. PetB subfamily.</text>
</comment>
<organism>
    <name type="scientific">Oenothera elata subsp. hookeri</name>
    <name type="common">Hooker's evening primrose</name>
    <name type="synonym">Oenothera hookeri</name>
    <dbReference type="NCBI Taxonomy" id="85636"/>
    <lineage>
        <taxon>Eukaryota</taxon>
        <taxon>Viridiplantae</taxon>
        <taxon>Streptophyta</taxon>
        <taxon>Embryophyta</taxon>
        <taxon>Tracheophyta</taxon>
        <taxon>Spermatophyta</taxon>
        <taxon>Magnoliopsida</taxon>
        <taxon>eudicotyledons</taxon>
        <taxon>Gunneridae</taxon>
        <taxon>Pentapetalae</taxon>
        <taxon>rosids</taxon>
        <taxon>malvids</taxon>
        <taxon>Myrtales</taxon>
        <taxon>Onagraceae</taxon>
        <taxon>Onagroideae</taxon>
        <taxon>Onagreae</taxon>
        <taxon>Oenothera</taxon>
    </lineage>
</organism>